<feature type="chain" id="PRO_0000357420" description="Enolase-phosphatase E1">
    <location>
        <begin position="1"/>
        <end position="228"/>
    </location>
</feature>
<dbReference type="EC" id="3.1.3.77" evidence="1"/>
<dbReference type="EMBL" id="CP000951">
    <property type="protein sequence ID" value="ACA98559.1"/>
    <property type="molecule type" value="Genomic_DNA"/>
</dbReference>
<dbReference type="RefSeq" id="WP_012306183.1">
    <property type="nucleotide sequence ID" value="NZ_JAHHPU010000001.1"/>
</dbReference>
<dbReference type="SMR" id="B1XPT1"/>
<dbReference type="STRING" id="32049.SYNPCC7002_A0552"/>
<dbReference type="KEGG" id="syp:SYNPCC7002_A0552"/>
<dbReference type="eggNOG" id="COG4229">
    <property type="taxonomic scope" value="Bacteria"/>
</dbReference>
<dbReference type="HOGENOM" id="CLU_023273_0_0_3"/>
<dbReference type="UniPathway" id="UPA00904">
    <property type="reaction ID" value="UER00876"/>
</dbReference>
<dbReference type="UniPathway" id="UPA00904">
    <property type="reaction ID" value="UER00877"/>
</dbReference>
<dbReference type="Proteomes" id="UP000001688">
    <property type="component" value="Chromosome"/>
</dbReference>
<dbReference type="GO" id="GO:0043715">
    <property type="term" value="F:2,3-diketo-5-methylthiopentyl-1-phosphate enolase activity"/>
    <property type="evidence" value="ECO:0007669"/>
    <property type="project" value="UniProtKB-UniRule"/>
</dbReference>
<dbReference type="GO" id="GO:0043716">
    <property type="term" value="F:2-hydroxy-3-keto-5-methylthiopentenyl-1-phosphate phosphatase activity"/>
    <property type="evidence" value="ECO:0007669"/>
    <property type="project" value="UniProtKB-UniRule"/>
</dbReference>
<dbReference type="GO" id="GO:0043874">
    <property type="term" value="F:acireductone synthase activity"/>
    <property type="evidence" value="ECO:0007669"/>
    <property type="project" value="UniProtKB-EC"/>
</dbReference>
<dbReference type="GO" id="GO:0000287">
    <property type="term" value="F:magnesium ion binding"/>
    <property type="evidence" value="ECO:0007669"/>
    <property type="project" value="UniProtKB-UniRule"/>
</dbReference>
<dbReference type="GO" id="GO:0019509">
    <property type="term" value="P:L-methionine salvage from methylthioadenosine"/>
    <property type="evidence" value="ECO:0007669"/>
    <property type="project" value="UniProtKB-UniRule"/>
</dbReference>
<dbReference type="CDD" id="cd01629">
    <property type="entry name" value="HAD_EP"/>
    <property type="match status" value="1"/>
</dbReference>
<dbReference type="Gene3D" id="1.10.720.60">
    <property type="match status" value="1"/>
</dbReference>
<dbReference type="Gene3D" id="3.40.50.1000">
    <property type="entry name" value="HAD superfamily/HAD-like"/>
    <property type="match status" value="1"/>
</dbReference>
<dbReference type="HAMAP" id="MF_01681">
    <property type="entry name" value="Salvage_MtnC"/>
    <property type="match status" value="1"/>
</dbReference>
<dbReference type="InterPro" id="IPR023943">
    <property type="entry name" value="Enolase-ppase_E1"/>
</dbReference>
<dbReference type="InterPro" id="IPR036412">
    <property type="entry name" value="HAD-like_sf"/>
</dbReference>
<dbReference type="InterPro" id="IPR006439">
    <property type="entry name" value="HAD-SF_hydro_IA"/>
</dbReference>
<dbReference type="InterPro" id="IPR023214">
    <property type="entry name" value="HAD_sf"/>
</dbReference>
<dbReference type="NCBIfam" id="TIGR01691">
    <property type="entry name" value="enolase-ppase"/>
    <property type="match status" value="1"/>
</dbReference>
<dbReference type="NCBIfam" id="TIGR01549">
    <property type="entry name" value="HAD-SF-IA-v1"/>
    <property type="match status" value="1"/>
</dbReference>
<dbReference type="PANTHER" id="PTHR20371">
    <property type="entry name" value="ENOLASE-PHOSPHATASE E1"/>
    <property type="match status" value="1"/>
</dbReference>
<dbReference type="PANTHER" id="PTHR20371:SF1">
    <property type="entry name" value="ENOLASE-PHOSPHATASE E1"/>
    <property type="match status" value="1"/>
</dbReference>
<dbReference type="Pfam" id="PF00702">
    <property type="entry name" value="Hydrolase"/>
    <property type="match status" value="1"/>
</dbReference>
<dbReference type="PRINTS" id="PR00413">
    <property type="entry name" value="HADHALOGNASE"/>
</dbReference>
<dbReference type="SFLD" id="SFLDG01133">
    <property type="entry name" value="C1.5.4:_Enolase-phosphatase_Li"/>
    <property type="match status" value="1"/>
</dbReference>
<dbReference type="SFLD" id="SFLDF00044">
    <property type="entry name" value="enolase-phosphatase"/>
    <property type="match status" value="1"/>
</dbReference>
<dbReference type="SUPFAM" id="SSF56784">
    <property type="entry name" value="HAD-like"/>
    <property type="match status" value="1"/>
</dbReference>
<organism>
    <name type="scientific">Picosynechococcus sp. (strain ATCC 27264 / PCC 7002 / PR-6)</name>
    <name type="common">Agmenellum quadruplicatum</name>
    <dbReference type="NCBI Taxonomy" id="32049"/>
    <lineage>
        <taxon>Bacteria</taxon>
        <taxon>Bacillati</taxon>
        <taxon>Cyanobacteriota</taxon>
        <taxon>Cyanophyceae</taxon>
        <taxon>Oscillatoriophycideae</taxon>
        <taxon>Chroococcales</taxon>
        <taxon>Geminocystaceae</taxon>
        <taxon>Picosynechococcus</taxon>
    </lineage>
</organism>
<name>MTNC_PICP2</name>
<proteinExistence type="inferred from homology"/>
<reference key="1">
    <citation type="submission" date="2008-02" db="EMBL/GenBank/DDBJ databases">
        <title>Complete sequence of Synechococcus sp. PCC 7002.</title>
        <authorList>
            <person name="Li T."/>
            <person name="Zhao J."/>
            <person name="Zhao C."/>
            <person name="Liu Z."/>
            <person name="Zhao F."/>
            <person name="Marquardt J."/>
            <person name="Nomura C.T."/>
            <person name="Persson S."/>
            <person name="Detter J.C."/>
            <person name="Richardson P.M."/>
            <person name="Lanz C."/>
            <person name="Schuster S.C."/>
            <person name="Wang J."/>
            <person name="Li S."/>
            <person name="Huang X."/>
            <person name="Cai T."/>
            <person name="Yu Z."/>
            <person name="Luo J."/>
            <person name="Zhao J."/>
            <person name="Bryant D.A."/>
        </authorList>
    </citation>
    <scope>NUCLEOTIDE SEQUENCE [LARGE SCALE GENOMIC DNA]</scope>
    <source>
        <strain>ATCC 27264 / PCC 7002 / PR-6</strain>
    </source>
</reference>
<evidence type="ECO:0000255" key="1">
    <source>
        <dbReference type="HAMAP-Rule" id="MF_01681"/>
    </source>
</evidence>
<sequence length="228" mass="25394">MIQFVLMDIEGTTTSVSFVFDVLFPYFRDNIQSIASRAEEPEIAAILKQVQDLALTETGTSLDQTGAIATLHQWSVEDRKVAPLKAMQGFLWEEGYKNGDFRGHVYPDVLPKLKEWQKEGIQLGIYSSGSVKAQKLLFGYSDYGDLTGYFDYFFDLKVGQKRDVQSYQAIAQAVQLPPEAILFLSDVPAELDAAIQAGYQAWQLVRPGTTASPTHQQVTDFGAITSLH</sequence>
<protein>
    <recommendedName>
        <fullName evidence="1">Enolase-phosphatase E1</fullName>
        <ecNumber evidence="1">3.1.3.77</ecNumber>
    </recommendedName>
    <alternativeName>
        <fullName evidence="1">2,3-diketo-5-methylthio-1-phosphopentane phosphatase</fullName>
    </alternativeName>
</protein>
<comment type="function">
    <text evidence="1">Bifunctional enzyme that catalyzes the enolization of 2,3-diketo-5-methylthiopentyl-1-phosphate (DK-MTP-1-P) into the intermediate 2-hydroxy-3-keto-5-methylthiopentenyl-1-phosphate (HK-MTPenyl-1-P), which is then dephosphorylated to form the acireductone 1,2-dihydroxy-3-keto-5-methylthiopentene (DHK-MTPene).</text>
</comment>
<comment type="catalytic activity">
    <reaction evidence="1">
        <text>5-methylsulfanyl-2,3-dioxopentyl phosphate + H2O = 1,2-dihydroxy-5-(methylsulfanyl)pent-1-en-3-one + phosphate</text>
        <dbReference type="Rhea" id="RHEA:21700"/>
        <dbReference type="ChEBI" id="CHEBI:15377"/>
        <dbReference type="ChEBI" id="CHEBI:43474"/>
        <dbReference type="ChEBI" id="CHEBI:49252"/>
        <dbReference type="ChEBI" id="CHEBI:58828"/>
        <dbReference type="EC" id="3.1.3.77"/>
    </reaction>
</comment>
<comment type="cofactor">
    <cofactor evidence="1">
        <name>Mg(2+)</name>
        <dbReference type="ChEBI" id="CHEBI:18420"/>
    </cofactor>
    <text evidence="1">Binds 1 Mg(2+) ion per subunit.</text>
</comment>
<comment type="pathway">
    <text evidence="1">Amino-acid biosynthesis; L-methionine biosynthesis via salvage pathway; L-methionine from S-methyl-5-thio-alpha-D-ribose 1-phosphate: step 3/6.</text>
</comment>
<comment type="pathway">
    <text evidence="1">Amino-acid biosynthesis; L-methionine biosynthesis via salvage pathway; L-methionine from S-methyl-5-thio-alpha-D-ribose 1-phosphate: step 4/6.</text>
</comment>
<comment type="subunit">
    <text evidence="1">Monomer.</text>
</comment>
<comment type="similarity">
    <text evidence="1">Belongs to the HAD-like hydrolase superfamily. MasA/MtnC family.</text>
</comment>
<keyword id="KW-0028">Amino-acid biosynthesis</keyword>
<keyword id="KW-0378">Hydrolase</keyword>
<keyword id="KW-0460">Magnesium</keyword>
<keyword id="KW-0479">Metal-binding</keyword>
<keyword id="KW-0486">Methionine biosynthesis</keyword>
<keyword id="KW-1185">Reference proteome</keyword>
<accession>B1XPT1</accession>
<gene>
    <name evidence="1" type="primary">mtnC</name>
    <name type="ordered locus">SYNPCC7002_A0552</name>
</gene>